<keyword id="KW-0150">Chloroplast</keyword>
<keyword id="KW-0507">mRNA processing</keyword>
<keyword id="KW-0934">Plastid</keyword>
<keyword id="KW-0694">RNA-binding</keyword>
<keyword id="KW-0819">tRNA processing</keyword>
<dbReference type="EMBL" id="EF614270">
    <property type="protein sequence ID" value="ABQ81431.1"/>
    <property type="molecule type" value="Genomic_DNA"/>
</dbReference>
<dbReference type="RefSeq" id="YP_001542428.1">
    <property type="nucleotide sequence ID" value="NC_009962.1"/>
</dbReference>
<dbReference type="GeneID" id="5729440"/>
<dbReference type="GO" id="GO:0009507">
    <property type="term" value="C:chloroplast"/>
    <property type="evidence" value="ECO:0007669"/>
    <property type="project" value="UniProtKB-SubCell"/>
</dbReference>
<dbReference type="GO" id="GO:0003723">
    <property type="term" value="F:RNA binding"/>
    <property type="evidence" value="ECO:0007669"/>
    <property type="project" value="UniProtKB-KW"/>
</dbReference>
<dbReference type="GO" id="GO:0006397">
    <property type="term" value="P:mRNA processing"/>
    <property type="evidence" value="ECO:0007669"/>
    <property type="project" value="UniProtKB-KW"/>
</dbReference>
<dbReference type="GO" id="GO:0008380">
    <property type="term" value="P:RNA splicing"/>
    <property type="evidence" value="ECO:0007669"/>
    <property type="project" value="UniProtKB-UniRule"/>
</dbReference>
<dbReference type="GO" id="GO:0008033">
    <property type="term" value="P:tRNA processing"/>
    <property type="evidence" value="ECO:0007669"/>
    <property type="project" value="UniProtKB-KW"/>
</dbReference>
<dbReference type="HAMAP" id="MF_01390">
    <property type="entry name" value="MatK"/>
    <property type="match status" value="1"/>
</dbReference>
<dbReference type="InterPro" id="IPR024937">
    <property type="entry name" value="Domain_X"/>
</dbReference>
<dbReference type="InterPro" id="IPR002866">
    <property type="entry name" value="Maturase_MatK"/>
</dbReference>
<dbReference type="InterPro" id="IPR024942">
    <property type="entry name" value="Maturase_MatK_N"/>
</dbReference>
<dbReference type="PANTHER" id="PTHR34811">
    <property type="entry name" value="MATURASE K"/>
    <property type="match status" value="1"/>
</dbReference>
<dbReference type="PANTHER" id="PTHR34811:SF1">
    <property type="entry name" value="MATURASE K"/>
    <property type="match status" value="1"/>
</dbReference>
<dbReference type="Pfam" id="PF01348">
    <property type="entry name" value="Intron_maturas2"/>
    <property type="match status" value="1"/>
</dbReference>
<dbReference type="Pfam" id="PF01824">
    <property type="entry name" value="MatK_N"/>
    <property type="match status" value="1"/>
</dbReference>
<protein>
    <recommendedName>
        <fullName evidence="1">Maturase K</fullName>
    </recommendedName>
    <alternativeName>
        <fullName evidence="1">Intron maturase</fullName>
    </alternativeName>
</protein>
<accession>A8SE44</accession>
<organism>
    <name type="scientific">Ceratophyllum demersum</name>
    <name type="common">Rigid hornwort</name>
    <name type="synonym">Coontail</name>
    <dbReference type="NCBI Taxonomy" id="4428"/>
    <lineage>
        <taxon>Eukaryota</taxon>
        <taxon>Viridiplantae</taxon>
        <taxon>Streptophyta</taxon>
        <taxon>Embryophyta</taxon>
        <taxon>Tracheophyta</taxon>
        <taxon>Spermatophyta</taxon>
        <taxon>Magnoliopsida</taxon>
        <taxon>Ceratophyllales</taxon>
        <taxon>Ceratophyllaceae</taxon>
        <taxon>Ceratophyllum</taxon>
    </lineage>
</organism>
<evidence type="ECO:0000255" key="1">
    <source>
        <dbReference type="HAMAP-Rule" id="MF_01390"/>
    </source>
</evidence>
<feature type="chain" id="PRO_0000355920" description="Maturase K">
    <location>
        <begin position="1"/>
        <end position="515"/>
    </location>
</feature>
<reference key="1">
    <citation type="journal article" date="2007" name="Proc. Natl. Acad. Sci. U.S.A.">
        <title>Using plastid genome-scale data to resolve enigmatic relationships among basal angiosperms.</title>
        <authorList>
            <person name="Moore M.J."/>
            <person name="Bell C.D."/>
            <person name="Soltis P.S."/>
            <person name="Soltis D.E."/>
        </authorList>
    </citation>
    <scope>NUCLEOTIDE SEQUENCE [LARGE SCALE GENOMIC DNA]</scope>
</reference>
<proteinExistence type="inferred from homology"/>
<geneLocation type="chloroplast"/>
<comment type="function">
    <text evidence="1">Usually encoded in the trnK tRNA gene intron. Probably assists in splicing its own and other chloroplast group II introns.</text>
</comment>
<comment type="subcellular location">
    <subcellularLocation>
        <location>Plastid</location>
        <location>Chloroplast</location>
    </subcellularLocation>
</comment>
<comment type="similarity">
    <text evidence="1">Belongs to the intron maturase 2 family. MatK subfamily.</text>
</comment>
<sequence length="515" mass="60997">MEESHGSLEIDGSTQQDLLYPLFFQEYIYAFVHDHGLNVNGSIIYEPMENLGYDKKSSSLSVKRLISRMHQQNHFLFSVNDSKQNRFVVHKNRSDFQMISQGFTVILEIPFSLQKVNILEEKKIEKFHNLRSIHAIFPFLEDKISHLIYVSDILIPYPVHLEILVQTLYCCIQDAPSLHFLRFFLQEYRNWNSFITPKRASSFFSKENQRLFLFLYNSHVYICESIFVFLHKQCSHHFRSTSFGAFLERTLFYGKIEHLVVVVVLRNDFQKSLGFYKDPFMHYVRYQGKSILAAKGTHFLMKKWKTHLMHFWQCNFHLWAQPDRIRINQFSKHSLDLMGYLSRLRLNRLVVRNQMLEHFFIIDIPIKKFDSIVPILPLIGSLAKAKFCNVSGHPISKPIRADSSDSDILDRFGRICRNLSHYHSGSSKKKSLYRVKYILRLSCARTLARKHKSTVRAFLKRLGSEFLEEFLTEEEQVLSLILSKTYLASHRSHKERIWYLDIIRINDLVNFEFKD</sequence>
<gene>
    <name evidence="1" type="primary">matK</name>
</gene>
<name>MATK_CERDE</name>